<reference key="1">
    <citation type="journal article" date="2005" name="Proc. Natl. Acad. Sci. U.S.A.">
        <title>The complete genome sequence of Mycobacterium avium subspecies paratuberculosis.</title>
        <authorList>
            <person name="Li L."/>
            <person name="Bannantine J.P."/>
            <person name="Zhang Q."/>
            <person name="Amonsin A."/>
            <person name="May B.J."/>
            <person name="Alt D."/>
            <person name="Banerji N."/>
            <person name="Kanjilal S."/>
            <person name="Kapur V."/>
        </authorList>
    </citation>
    <scope>NUCLEOTIDE SEQUENCE [LARGE SCALE GENOMIC DNA]</scope>
    <source>
        <strain>ATCC BAA-968 / K-10</strain>
    </source>
</reference>
<gene>
    <name type="primary">acyP</name>
    <name type="ordered locus">MAP_2991c</name>
</gene>
<name>ACYP_MYCPA</name>
<protein>
    <recommendedName>
        <fullName>Acylphosphatase</fullName>
        <ecNumber>3.6.1.7</ecNumber>
    </recommendedName>
    <alternativeName>
        <fullName>Acylphosphate phosphohydrolase</fullName>
    </alternativeName>
</protein>
<keyword id="KW-0378">Hydrolase</keyword>
<keyword id="KW-1185">Reference proteome</keyword>
<sequence>MPEPDARLTAWVHGHVQGVGFRWWTRCRALELGLTGYAANQPDGRVLVVAQGPRPAGEKLLELLRGGTTWPSRPGRVDKVVADWSAPQERFEGFVER</sequence>
<evidence type="ECO:0000255" key="1">
    <source>
        <dbReference type="PROSITE-ProRule" id="PRU00520"/>
    </source>
</evidence>
<evidence type="ECO:0000305" key="2"/>
<proteinExistence type="inferred from homology"/>
<comment type="catalytic activity">
    <reaction>
        <text>an acyl phosphate + H2O = a carboxylate + phosphate + H(+)</text>
        <dbReference type="Rhea" id="RHEA:14965"/>
        <dbReference type="ChEBI" id="CHEBI:15377"/>
        <dbReference type="ChEBI" id="CHEBI:15378"/>
        <dbReference type="ChEBI" id="CHEBI:29067"/>
        <dbReference type="ChEBI" id="CHEBI:43474"/>
        <dbReference type="ChEBI" id="CHEBI:59918"/>
        <dbReference type="EC" id="3.6.1.7"/>
    </reaction>
</comment>
<comment type="similarity">
    <text evidence="2">Belongs to the acylphosphatase family.</text>
</comment>
<feature type="chain" id="PRO_0000326749" description="Acylphosphatase">
    <location>
        <begin position="1"/>
        <end position="97"/>
    </location>
</feature>
<feature type="domain" description="Acylphosphatase-like" evidence="1">
    <location>
        <begin position="7"/>
        <end position="97"/>
    </location>
</feature>
<feature type="active site" evidence="1">
    <location>
        <position position="22"/>
    </location>
</feature>
<feature type="active site" evidence="1">
    <location>
        <position position="40"/>
    </location>
</feature>
<organism>
    <name type="scientific">Mycolicibacterium paratuberculosis (strain ATCC BAA-968 / K-10)</name>
    <name type="common">Mycobacterium paratuberculosis</name>
    <dbReference type="NCBI Taxonomy" id="262316"/>
    <lineage>
        <taxon>Bacteria</taxon>
        <taxon>Bacillati</taxon>
        <taxon>Actinomycetota</taxon>
        <taxon>Actinomycetes</taxon>
        <taxon>Mycobacteriales</taxon>
        <taxon>Mycobacteriaceae</taxon>
        <taxon>Mycobacterium</taxon>
        <taxon>Mycobacterium avium complex (MAC)</taxon>
    </lineage>
</organism>
<accession>Q73VM2</accession>
<dbReference type="EC" id="3.6.1.7"/>
<dbReference type="EMBL" id="AE016958">
    <property type="protein sequence ID" value="AAS05308.1"/>
    <property type="molecule type" value="Genomic_DNA"/>
</dbReference>
<dbReference type="RefSeq" id="WP_003875053.1">
    <property type="nucleotide sequence ID" value="NZ_CP106873.1"/>
</dbReference>
<dbReference type="SMR" id="Q73VM2"/>
<dbReference type="STRING" id="262316.MAP_2991c"/>
<dbReference type="KEGG" id="mpa:MAP_2991c"/>
<dbReference type="eggNOG" id="COG1254">
    <property type="taxonomic scope" value="Bacteria"/>
</dbReference>
<dbReference type="HOGENOM" id="CLU_141932_3_0_11"/>
<dbReference type="Proteomes" id="UP000000580">
    <property type="component" value="Chromosome"/>
</dbReference>
<dbReference type="GO" id="GO:0003998">
    <property type="term" value="F:acylphosphatase activity"/>
    <property type="evidence" value="ECO:0007669"/>
    <property type="project" value="UniProtKB-EC"/>
</dbReference>
<dbReference type="Gene3D" id="3.30.70.100">
    <property type="match status" value="1"/>
</dbReference>
<dbReference type="InterPro" id="IPR020456">
    <property type="entry name" value="Acylphosphatase"/>
</dbReference>
<dbReference type="InterPro" id="IPR001792">
    <property type="entry name" value="Acylphosphatase-like_dom"/>
</dbReference>
<dbReference type="InterPro" id="IPR036046">
    <property type="entry name" value="Acylphosphatase-like_dom_sf"/>
</dbReference>
<dbReference type="InterPro" id="IPR017968">
    <property type="entry name" value="Acylphosphatase_CS"/>
</dbReference>
<dbReference type="NCBIfam" id="NF010997">
    <property type="entry name" value="PRK14422.1"/>
    <property type="match status" value="1"/>
</dbReference>
<dbReference type="PANTHER" id="PTHR47268">
    <property type="entry name" value="ACYLPHOSPHATASE"/>
    <property type="match status" value="1"/>
</dbReference>
<dbReference type="PANTHER" id="PTHR47268:SF4">
    <property type="entry name" value="ACYLPHOSPHATASE"/>
    <property type="match status" value="1"/>
</dbReference>
<dbReference type="Pfam" id="PF00708">
    <property type="entry name" value="Acylphosphatase"/>
    <property type="match status" value="1"/>
</dbReference>
<dbReference type="SUPFAM" id="SSF54975">
    <property type="entry name" value="Acylphosphatase/BLUF domain-like"/>
    <property type="match status" value="1"/>
</dbReference>
<dbReference type="PROSITE" id="PS00150">
    <property type="entry name" value="ACYLPHOSPHATASE_1"/>
    <property type="match status" value="1"/>
</dbReference>
<dbReference type="PROSITE" id="PS00151">
    <property type="entry name" value="ACYLPHOSPHATASE_2"/>
    <property type="match status" value="1"/>
</dbReference>
<dbReference type="PROSITE" id="PS51160">
    <property type="entry name" value="ACYLPHOSPHATASE_3"/>
    <property type="match status" value="1"/>
</dbReference>